<name>RS14_NOVAD</name>
<reference key="1">
    <citation type="submission" date="2006-01" db="EMBL/GenBank/DDBJ databases">
        <title>Complete sequence of Novosphingobium aromaticivorans DSM 12444.</title>
        <authorList>
            <consortium name="US DOE Joint Genome Institute"/>
            <person name="Copeland A."/>
            <person name="Lucas S."/>
            <person name="Lapidus A."/>
            <person name="Barry K."/>
            <person name="Detter J.C."/>
            <person name="Glavina T."/>
            <person name="Hammon N."/>
            <person name="Israni S."/>
            <person name="Pitluck S."/>
            <person name="Chain P."/>
            <person name="Malfatti S."/>
            <person name="Shin M."/>
            <person name="Vergez L."/>
            <person name="Schmutz J."/>
            <person name="Larimer F."/>
            <person name="Land M."/>
            <person name="Kyrpides N."/>
            <person name="Ivanova N."/>
            <person name="Fredrickson J."/>
            <person name="Balkwill D."/>
            <person name="Romine M.F."/>
            <person name="Richardson P."/>
        </authorList>
    </citation>
    <scope>NUCLEOTIDE SEQUENCE [LARGE SCALE GENOMIC DNA]</scope>
    <source>
        <strain>ATCC 700278 / DSM 12444 / CCUG 56034 / CIP 105152 / NBRC 16084 / F199</strain>
    </source>
</reference>
<gene>
    <name evidence="1" type="primary">rpsN</name>
    <name type="ordered locus">Saro_1262</name>
</gene>
<accession>Q2G8W7</accession>
<protein>
    <recommendedName>
        <fullName evidence="1">Small ribosomal subunit protein uS14</fullName>
    </recommendedName>
    <alternativeName>
        <fullName evidence="2">30S ribosomal protein S14</fullName>
    </alternativeName>
</protein>
<evidence type="ECO:0000255" key="1">
    <source>
        <dbReference type="HAMAP-Rule" id="MF_00537"/>
    </source>
</evidence>
<evidence type="ECO:0000305" key="2"/>
<sequence>MAKLSSINKNERRKKLVEKYAAKYAALKATADDQSLDETERLIARLKMAELPRNANPTRVRNRCNTTGRPRGYYRKFGLCRIELRDLANKGLIPGVTKSSW</sequence>
<comment type="function">
    <text evidence="1">Binds 16S rRNA, required for the assembly of 30S particles and may also be responsible for determining the conformation of the 16S rRNA at the A site.</text>
</comment>
<comment type="subunit">
    <text evidence="1">Part of the 30S ribosomal subunit. Contacts proteins S3 and S10.</text>
</comment>
<comment type="similarity">
    <text evidence="1">Belongs to the universal ribosomal protein uS14 family.</text>
</comment>
<keyword id="KW-1185">Reference proteome</keyword>
<keyword id="KW-0687">Ribonucleoprotein</keyword>
<keyword id="KW-0689">Ribosomal protein</keyword>
<keyword id="KW-0694">RNA-binding</keyword>
<keyword id="KW-0699">rRNA-binding</keyword>
<feature type="chain" id="PRO_1000128471" description="Small ribosomal subunit protein uS14">
    <location>
        <begin position="1"/>
        <end position="101"/>
    </location>
</feature>
<dbReference type="EMBL" id="CP000248">
    <property type="protein sequence ID" value="ABD25706.1"/>
    <property type="molecule type" value="Genomic_DNA"/>
</dbReference>
<dbReference type="RefSeq" id="WP_011444920.1">
    <property type="nucleotide sequence ID" value="NC_007794.1"/>
</dbReference>
<dbReference type="SMR" id="Q2G8W7"/>
<dbReference type="STRING" id="279238.Saro_1262"/>
<dbReference type="KEGG" id="nar:Saro_1262"/>
<dbReference type="eggNOG" id="COG0199">
    <property type="taxonomic scope" value="Bacteria"/>
</dbReference>
<dbReference type="HOGENOM" id="CLU_139869_0_1_5"/>
<dbReference type="Proteomes" id="UP000009134">
    <property type="component" value="Chromosome"/>
</dbReference>
<dbReference type="GO" id="GO:0005737">
    <property type="term" value="C:cytoplasm"/>
    <property type="evidence" value="ECO:0007669"/>
    <property type="project" value="UniProtKB-ARBA"/>
</dbReference>
<dbReference type="GO" id="GO:0015935">
    <property type="term" value="C:small ribosomal subunit"/>
    <property type="evidence" value="ECO:0007669"/>
    <property type="project" value="TreeGrafter"/>
</dbReference>
<dbReference type="GO" id="GO:0019843">
    <property type="term" value="F:rRNA binding"/>
    <property type="evidence" value="ECO:0007669"/>
    <property type="project" value="UniProtKB-UniRule"/>
</dbReference>
<dbReference type="GO" id="GO:0003735">
    <property type="term" value="F:structural constituent of ribosome"/>
    <property type="evidence" value="ECO:0007669"/>
    <property type="project" value="InterPro"/>
</dbReference>
<dbReference type="GO" id="GO:0006412">
    <property type="term" value="P:translation"/>
    <property type="evidence" value="ECO:0007669"/>
    <property type="project" value="UniProtKB-UniRule"/>
</dbReference>
<dbReference type="FunFam" id="1.10.287.1480:FF:000001">
    <property type="entry name" value="30S ribosomal protein S14"/>
    <property type="match status" value="1"/>
</dbReference>
<dbReference type="Gene3D" id="1.10.287.1480">
    <property type="match status" value="1"/>
</dbReference>
<dbReference type="HAMAP" id="MF_00537">
    <property type="entry name" value="Ribosomal_uS14_1"/>
    <property type="match status" value="1"/>
</dbReference>
<dbReference type="InterPro" id="IPR001209">
    <property type="entry name" value="Ribosomal_uS14"/>
</dbReference>
<dbReference type="InterPro" id="IPR023036">
    <property type="entry name" value="Ribosomal_uS14_bac/plastid"/>
</dbReference>
<dbReference type="InterPro" id="IPR018271">
    <property type="entry name" value="Ribosomal_uS14_CS"/>
</dbReference>
<dbReference type="NCBIfam" id="NF006477">
    <property type="entry name" value="PRK08881.1"/>
    <property type="match status" value="1"/>
</dbReference>
<dbReference type="PANTHER" id="PTHR19836">
    <property type="entry name" value="30S RIBOSOMAL PROTEIN S14"/>
    <property type="match status" value="1"/>
</dbReference>
<dbReference type="PANTHER" id="PTHR19836:SF19">
    <property type="entry name" value="SMALL RIBOSOMAL SUBUNIT PROTEIN US14M"/>
    <property type="match status" value="1"/>
</dbReference>
<dbReference type="Pfam" id="PF00253">
    <property type="entry name" value="Ribosomal_S14"/>
    <property type="match status" value="1"/>
</dbReference>
<dbReference type="SUPFAM" id="SSF57716">
    <property type="entry name" value="Glucocorticoid receptor-like (DNA-binding domain)"/>
    <property type="match status" value="1"/>
</dbReference>
<dbReference type="PROSITE" id="PS00527">
    <property type="entry name" value="RIBOSOMAL_S14"/>
    <property type="match status" value="1"/>
</dbReference>
<organism>
    <name type="scientific">Novosphingobium aromaticivorans (strain ATCC 700278 / DSM 12444 / CCUG 56034 / CIP 105152 / NBRC 16084 / F199)</name>
    <dbReference type="NCBI Taxonomy" id="279238"/>
    <lineage>
        <taxon>Bacteria</taxon>
        <taxon>Pseudomonadati</taxon>
        <taxon>Pseudomonadota</taxon>
        <taxon>Alphaproteobacteria</taxon>
        <taxon>Sphingomonadales</taxon>
        <taxon>Sphingomonadaceae</taxon>
        <taxon>Novosphingobium</taxon>
    </lineage>
</organism>
<proteinExistence type="inferred from homology"/>